<protein>
    <recommendedName>
        <fullName evidence="1">Large-conductance mechanosensitive channel</fullName>
    </recommendedName>
</protein>
<accession>A6U1G8</accession>
<sequence length="120" mass="13616">MLKEFKEFALKGNVLDLAIAVVMGAAFNKIISSLVENIIMPLIGKIFGSVDFAKEWSFWGIKYGLFIQSVIDFIIIAFALFIFVKIANTLMKKEEAEEEAVVEENVVLLTEIRDLLREKK</sequence>
<comment type="function">
    <text evidence="1">Channel that opens in response to stretch forces in the membrane lipid bilayer. May participate in the regulation of osmotic pressure changes within the cell.</text>
</comment>
<comment type="subunit">
    <text evidence="1">Homopentamer.</text>
</comment>
<comment type="subcellular location">
    <subcellularLocation>
        <location evidence="1">Cell membrane</location>
        <topology evidence="1">Multi-pass membrane protein</topology>
    </subcellularLocation>
</comment>
<comment type="similarity">
    <text evidence="1">Belongs to the MscL family.</text>
</comment>
<organism>
    <name type="scientific">Staphylococcus aureus (strain JH1)</name>
    <dbReference type="NCBI Taxonomy" id="359787"/>
    <lineage>
        <taxon>Bacteria</taxon>
        <taxon>Bacillati</taxon>
        <taxon>Bacillota</taxon>
        <taxon>Bacilli</taxon>
        <taxon>Bacillales</taxon>
        <taxon>Staphylococcaceae</taxon>
        <taxon>Staphylococcus</taxon>
    </lineage>
</organism>
<gene>
    <name evidence="1" type="primary">mscL</name>
    <name type="ordered locus">SaurJH1_1436</name>
</gene>
<dbReference type="EMBL" id="CP000736">
    <property type="protein sequence ID" value="ABR52286.1"/>
    <property type="molecule type" value="Genomic_DNA"/>
</dbReference>
<dbReference type="SMR" id="A6U1G8"/>
<dbReference type="KEGG" id="sah:SaurJH1_1436"/>
<dbReference type="HOGENOM" id="CLU_095787_0_0_9"/>
<dbReference type="GO" id="GO:0005886">
    <property type="term" value="C:plasma membrane"/>
    <property type="evidence" value="ECO:0007669"/>
    <property type="project" value="UniProtKB-SubCell"/>
</dbReference>
<dbReference type="GO" id="GO:0008381">
    <property type="term" value="F:mechanosensitive monoatomic ion channel activity"/>
    <property type="evidence" value="ECO:0007669"/>
    <property type="project" value="UniProtKB-UniRule"/>
</dbReference>
<dbReference type="FunFam" id="1.10.1200.120:FF:000002">
    <property type="entry name" value="Large-conductance mechanosensitive channel"/>
    <property type="match status" value="1"/>
</dbReference>
<dbReference type="Gene3D" id="1.10.1200.120">
    <property type="entry name" value="Large-conductance mechanosensitive channel, MscL, domain 1"/>
    <property type="match status" value="1"/>
</dbReference>
<dbReference type="HAMAP" id="MF_00115">
    <property type="entry name" value="MscL"/>
    <property type="match status" value="1"/>
</dbReference>
<dbReference type="InterPro" id="IPR019823">
    <property type="entry name" value="Mechanosensitive_channel_CS"/>
</dbReference>
<dbReference type="InterPro" id="IPR001185">
    <property type="entry name" value="MS_channel"/>
</dbReference>
<dbReference type="InterPro" id="IPR037673">
    <property type="entry name" value="MSC/AndL"/>
</dbReference>
<dbReference type="InterPro" id="IPR036019">
    <property type="entry name" value="MscL_channel"/>
</dbReference>
<dbReference type="NCBIfam" id="TIGR00220">
    <property type="entry name" value="mscL"/>
    <property type="match status" value="1"/>
</dbReference>
<dbReference type="NCBIfam" id="NF010559">
    <property type="entry name" value="PRK13954.1"/>
    <property type="match status" value="1"/>
</dbReference>
<dbReference type="PANTHER" id="PTHR30266:SF2">
    <property type="entry name" value="LARGE-CONDUCTANCE MECHANOSENSITIVE CHANNEL"/>
    <property type="match status" value="1"/>
</dbReference>
<dbReference type="PANTHER" id="PTHR30266">
    <property type="entry name" value="MECHANOSENSITIVE CHANNEL MSCL"/>
    <property type="match status" value="1"/>
</dbReference>
<dbReference type="Pfam" id="PF01741">
    <property type="entry name" value="MscL"/>
    <property type="match status" value="1"/>
</dbReference>
<dbReference type="PRINTS" id="PR01264">
    <property type="entry name" value="MECHCHANNEL"/>
</dbReference>
<dbReference type="SUPFAM" id="SSF81330">
    <property type="entry name" value="Gated mechanosensitive channel"/>
    <property type="match status" value="1"/>
</dbReference>
<dbReference type="PROSITE" id="PS01327">
    <property type="entry name" value="MSCL"/>
    <property type="match status" value="1"/>
</dbReference>
<feature type="chain" id="PRO_1000076048" description="Large-conductance mechanosensitive channel">
    <location>
        <begin position="1"/>
        <end position="120"/>
    </location>
</feature>
<feature type="transmembrane region" description="Helical" evidence="1">
    <location>
        <begin position="7"/>
        <end position="27"/>
    </location>
</feature>
<feature type="transmembrane region" description="Helical" evidence="1">
    <location>
        <begin position="64"/>
        <end position="84"/>
    </location>
</feature>
<name>MSCL_STAA2</name>
<reference key="1">
    <citation type="submission" date="2007-06" db="EMBL/GenBank/DDBJ databases">
        <title>Complete sequence of chromosome of Staphylococcus aureus subsp. aureus JH1.</title>
        <authorList>
            <consortium name="US DOE Joint Genome Institute"/>
            <person name="Copeland A."/>
            <person name="Lucas S."/>
            <person name="Lapidus A."/>
            <person name="Barry K."/>
            <person name="Detter J.C."/>
            <person name="Glavina del Rio T."/>
            <person name="Hammon N."/>
            <person name="Israni S."/>
            <person name="Dalin E."/>
            <person name="Tice H."/>
            <person name="Pitluck S."/>
            <person name="Chain P."/>
            <person name="Malfatti S."/>
            <person name="Shin M."/>
            <person name="Vergez L."/>
            <person name="Schmutz J."/>
            <person name="Larimer F."/>
            <person name="Land M."/>
            <person name="Hauser L."/>
            <person name="Kyrpides N."/>
            <person name="Ivanova N."/>
            <person name="Tomasz A."/>
            <person name="Richardson P."/>
        </authorList>
    </citation>
    <scope>NUCLEOTIDE SEQUENCE [LARGE SCALE GENOMIC DNA]</scope>
    <source>
        <strain>JH1</strain>
    </source>
</reference>
<evidence type="ECO:0000255" key="1">
    <source>
        <dbReference type="HAMAP-Rule" id="MF_00115"/>
    </source>
</evidence>
<proteinExistence type="inferred from homology"/>
<keyword id="KW-1003">Cell membrane</keyword>
<keyword id="KW-0407">Ion channel</keyword>
<keyword id="KW-0406">Ion transport</keyword>
<keyword id="KW-0472">Membrane</keyword>
<keyword id="KW-0812">Transmembrane</keyword>
<keyword id="KW-1133">Transmembrane helix</keyword>
<keyword id="KW-0813">Transport</keyword>